<comment type="function">
    <molecule>Glycoprotein N</molecule>
    <text evidence="2">Glycoprotein N and glycoprotein C interact with each other and are present at the surface of the virion. Glycoprotein N probably locks the Gn-Gc complex in a prefusion state. Glycoprotein N and glycoprotein C are able to attach the virion to host cell receptors. This attachment induces virion internalization predominantly through clathrin-dependent endocytosis.</text>
</comment>
<comment type="function">
    <molecule>Glycoprotein C</molecule>
    <text evidence="1 2 5">Glycoprotein C and glycoprotein N interact with each other and are present at the surface of the virion (By similarity). The spikes at the surface of the virion are formed by an N-terminal extension of glycoprotein C (By similarity). Glycoprotein N and glycoprotein C are able to attach the virion to host cell receptors (By similarity). This attachment induces virion internalization predominantly through clathrin-dependent endocytosis (By similarity). Class II fusion protein that promotes fusion of viral membrane with host endosomal membrane after endocytosis of the virion (By similarity). Exposure to potassium is necessary for the conformational change leading to fusion (PubMed:29678879).</text>
</comment>
<comment type="subunit">
    <molecule>Glycoprotein N</molecule>
    <text evidence="2">Heterodimer with glycoprotein C; in prefusion state.</text>
</comment>
<comment type="subunit">
    <molecule>Glycoprotein C</molecule>
    <text evidence="2">Heterodimer with glycoprotein N; in prefusion state (By similarity). Homotrimeric; in postfusion state (By similarity).</text>
</comment>
<comment type="subcellular location">
    <molecule>Envelopment polyprotein</molecule>
    <subcellularLocation>
        <location evidence="2">Host endoplasmic reticulum membrane</location>
    </subcellularLocation>
</comment>
<comment type="subcellular location">
    <molecule>Glycoprotein C</molecule>
    <subcellularLocation>
        <location evidence="2">Virion membrane</location>
        <topology evidence="2">Single-pass type I membrane protein</topology>
    </subcellularLocation>
    <subcellularLocation>
        <location evidence="2">Host Golgi apparatus membrane</location>
        <topology evidence="2">Single-pass type I membrane protein</topology>
    </subcellularLocation>
    <subcellularLocation>
        <location evidence="2">Host endoplasmic reticulum membrane</location>
        <topology evidence="2">Single-pass type I membrane protein</topology>
    </subcellularLocation>
    <text evidence="2">Interaction between glycoprotein C and glycoprotein N is essential for proper targeting of glycoprotein C to the Golgi complex, where virion budding occurs.</text>
</comment>
<comment type="subcellular location">
    <molecule>Glycoprotein N</molecule>
    <subcellularLocation>
        <location evidence="2">Virion membrane</location>
        <topology evidence="2">Multi-pass membrane protein</topology>
    </subcellularLocation>
    <subcellularLocation>
        <location evidence="2">Host Golgi apparatus membrane</location>
        <topology evidence="2">Multi-pass membrane protein</topology>
    </subcellularLocation>
</comment>
<comment type="subcellular location">
    <molecule>Non-Structural protein M</molecule>
    <subcellularLocation>
        <location evidence="2">Host Golgi apparatus membrane</location>
        <topology evidence="3">Multi-pass membrane protein</topology>
    </subcellularLocation>
</comment>
<comment type="PTM">
    <molecule>Envelopment polyprotein</molecule>
    <text evidence="2">Specific enzymatic cleavage by host MBTPS1/S1P/SKI-1 endopeptidase yield glycoprotein N. Specific enzymatic cleavages by host furin-like protease and MBTPS1/S1P endopeptidase yield GP38.</text>
</comment>
<comment type="PTM">
    <molecule>Glycoprotein N</molecule>
    <text evidence="2">Glycosylated.</text>
</comment>
<comment type="PTM">
    <molecule>Glycoprotein C</molecule>
    <text evidence="2">Glycosylated.</text>
</comment>
<comment type="similarity">
    <text evidence="6">Belongs to the nairovirus envelope glycoprotein family.</text>
</comment>
<keyword id="KW-1165">Clathrin-mediated endocytosis of virus by host</keyword>
<keyword id="KW-0165">Cleavage on pair of basic residues</keyword>
<keyword id="KW-1015">Disulfide bond</keyword>
<keyword id="KW-1170">Fusion of virus membrane with host endosomal membrane</keyword>
<keyword id="KW-1168">Fusion of virus membrane with host membrane</keyword>
<keyword id="KW-0325">Glycoprotein</keyword>
<keyword id="KW-1038">Host endoplasmic reticulum</keyword>
<keyword id="KW-1040">Host Golgi apparatus</keyword>
<keyword id="KW-1043">Host membrane</keyword>
<keyword id="KW-0945">Host-virus interaction</keyword>
<keyword id="KW-0472">Membrane</keyword>
<keyword id="KW-1185">Reference proteome</keyword>
<keyword id="KW-0732">Signal</keyword>
<keyword id="KW-0812">Transmembrane</keyword>
<keyword id="KW-1133">Transmembrane helix</keyword>
<keyword id="KW-1161">Viral attachment to host cell</keyword>
<keyword id="KW-0261">Viral envelope protein</keyword>
<keyword id="KW-1162">Viral penetration into host cytoplasm</keyword>
<keyword id="KW-0946">Virion</keyword>
<keyword id="KW-1164">Virus endocytosis by host</keyword>
<keyword id="KW-1160">Virus entry into host cell</keyword>
<gene>
    <name type="primary">GP</name>
</gene>
<proteinExistence type="inferred from homology"/>
<accession>A6XIP3</accession>
<dbReference type="EMBL" id="DQ813514">
    <property type="protein sequence ID" value="ABH07417.1"/>
    <property type="molecule type" value="Viral_cRNA"/>
</dbReference>
<dbReference type="EMBL" id="KP406724">
    <property type="protein sequence ID" value="AJW66842.1"/>
    <property type="molecule type" value="Viral_cRNA"/>
</dbReference>
<dbReference type="SMR" id="A6XIP3"/>
<dbReference type="Proteomes" id="UP000170142">
    <property type="component" value="Genome"/>
</dbReference>
<dbReference type="GO" id="GO:0044167">
    <property type="term" value="C:host cell endoplasmic reticulum membrane"/>
    <property type="evidence" value="ECO:0007669"/>
    <property type="project" value="UniProtKB-SubCell"/>
</dbReference>
<dbReference type="GO" id="GO:0044178">
    <property type="term" value="C:host cell Golgi membrane"/>
    <property type="evidence" value="ECO:0007669"/>
    <property type="project" value="UniProtKB-SubCell"/>
</dbReference>
<dbReference type="GO" id="GO:0016020">
    <property type="term" value="C:membrane"/>
    <property type="evidence" value="ECO:0007669"/>
    <property type="project" value="UniProtKB-KW"/>
</dbReference>
<dbReference type="GO" id="GO:0019031">
    <property type="term" value="C:viral envelope"/>
    <property type="evidence" value="ECO:0007669"/>
    <property type="project" value="UniProtKB-KW"/>
</dbReference>
<dbReference type="GO" id="GO:0055036">
    <property type="term" value="C:virion membrane"/>
    <property type="evidence" value="ECO:0007669"/>
    <property type="project" value="UniProtKB-SubCell"/>
</dbReference>
<dbReference type="GO" id="GO:0075512">
    <property type="term" value="P:clathrin-dependent endocytosis of virus by host cell"/>
    <property type="evidence" value="ECO:0007669"/>
    <property type="project" value="UniProtKB-KW"/>
</dbReference>
<dbReference type="GO" id="GO:0039654">
    <property type="term" value="P:fusion of virus membrane with host endosome membrane"/>
    <property type="evidence" value="ECO:0007669"/>
    <property type="project" value="UniProtKB-KW"/>
</dbReference>
<dbReference type="GO" id="GO:0019062">
    <property type="term" value="P:virion attachment to host cell"/>
    <property type="evidence" value="ECO:0007669"/>
    <property type="project" value="UniProtKB-KW"/>
</dbReference>
<dbReference type="Gene3D" id="1.10.8.1320">
    <property type="match status" value="1"/>
</dbReference>
<dbReference type="InterPro" id="IPR048791">
    <property type="entry name" value="Gc_C_bunya"/>
</dbReference>
<dbReference type="InterPro" id="IPR048801">
    <property type="entry name" value="Gn_nairovirus"/>
</dbReference>
<dbReference type="InterPro" id="IPR048529">
    <property type="entry name" value="GP38_nairovirus"/>
</dbReference>
<dbReference type="InterPro" id="IPR002532">
    <property type="entry name" value="Hanta_Gc_N"/>
</dbReference>
<dbReference type="Pfam" id="PF20682">
    <property type="entry name" value="Hanta_Gc_C"/>
    <property type="match status" value="1"/>
</dbReference>
<dbReference type="Pfam" id="PF01561">
    <property type="entry name" value="Hanta_Gc_N"/>
    <property type="match status" value="1"/>
</dbReference>
<dbReference type="Pfam" id="PF20726">
    <property type="entry name" value="Nairovirus_Gn"/>
    <property type="match status" value="1"/>
</dbReference>
<dbReference type="Pfam" id="PF07948">
    <property type="entry name" value="Nairovirus_GP38"/>
    <property type="match status" value="1"/>
</dbReference>
<feature type="signal peptide" evidence="3">
    <location>
        <begin position="1"/>
        <end position="20"/>
    </location>
</feature>
<feature type="chain" id="PRO_0000456440" description="Envelopment polyprotein" evidence="3">
    <location>
        <begin position="21"/>
        <end position="1421"/>
    </location>
</feature>
<feature type="chain" id="PRO_0000456441" description="GP38">
    <location>
        <begin position="21"/>
        <end position="307"/>
    </location>
</feature>
<feature type="chain" id="PRO_0000456442" description="Glycoprotein N" evidence="2">
    <location>
        <begin position="308"/>
        <end position="596"/>
    </location>
</feature>
<feature type="chain" id="PRO_0000456443" description="Non-Structural protein M" evidence="2">
    <location>
        <begin position="597"/>
        <end position="721"/>
    </location>
</feature>
<feature type="propeptide" id="PRO_0000456444">
    <location>
        <begin position="722"/>
        <end position="776"/>
    </location>
</feature>
<feature type="chain" id="PRO_0000456445" description="Glycoprotein C" evidence="2">
    <location>
        <begin position="777"/>
        <end position="1421"/>
    </location>
</feature>
<feature type="topological domain" description="Lumenal" evidence="6">
    <location>
        <begin position="21"/>
        <end position="479"/>
    </location>
</feature>
<feature type="transmembrane region" description="Helical" evidence="3">
    <location>
        <begin position="480"/>
        <end position="500"/>
    </location>
</feature>
<feature type="topological domain" description="Cytoplasmic" evidence="2">
    <location>
        <begin position="501"/>
        <end position="610"/>
    </location>
</feature>
<feature type="transmembrane region" description="Helical" evidence="3">
    <location>
        <begin position="611"/>
        <end position="631"/>
    </location>
</feature>
<feature type="topological domain" description="Lumenal" evidence="2">
    <location>
        <begin position="632"/>
        <end position="643"/>
    </location>
</feature>
<feature type="transmembrane region" description="Helical" evidence="3">
    <location>
        <begin position="644"/>
        <end position="664"/>
    </location>
</feature>
<feature type="topological domain" description="Cytoplasmic" evidence="2">
    <location>
        <begin position="665"/>
        <end position="708"/>
    </location>
</feature>
<feature type="transmembrane region" description="Helical" evidence="3">
    <location>
        <begin position="709"/>
        <end position="729"/>
    </location>
</feature>
<feature type="topological domain" description="Lumenal" evidence="6">
    <location>
        <begin position="730"/>
        <end position="1330"/>
    </location>
</feature>
<feature type="transmembrane region" description="Helical" evidence="3">
    <location>
        <begin position="1331"/>
        <end position="1351"/>
    </location>
</feature>
<feature type="topological domain" description="Cytoplasmic" evidence="6">
    <location>
        <begin position="1352"/>
        <end position="1421"/>
    </location>
</feature>
<feature type="region of interest" description="Disordered" evidence="4">
    <location>
        <begin position="22"/>
        <end position="42"/>
    </location>
</feature>
<feature type="compositionally biased region" description="Low complexity" evidence="4">
    <location>
        <begin position="22"/>
        <end position="31"/>
    </location>
</feature>
<feature type="site" description="Cleavage; by host MBTPS1/SKI-1 protease" evidence="2">
    <location>
        <begin position="307"/>
        <end position="308"/>
    </location>
</feature>
<feature type="site" description="Cleavage" evidence="2">
    <location>
        <begin position="596"/>
        <end position="597"/>
    </location>
</feature>
<feature type="site" description="Cleavage; by host signal peptidase" evidence="2">
    <location>
        <begin position="721"/>
        <end position="722"/>
    </location>
</feature>
<feature type="site" description="Cleavage; by host protease" evidence="2">
    <location>
        <begin position="776"/>
        <end position="777"/>
    </location>
</feature>
<feature type="site" description="Involved in fusion with the host membrane" evidence="2">
    <location>
        <position position="804"/>
    </location>
</feature>
<feature type="site" description="Involved in fusion with the host membrane" evidence="2">
    <location>
        <position position="927"/>
    </location>
</feature>
<feature type="site" description="Involved in fusion with the host membrane" evidence="2">
    <location>
        <position position="933"/>
    </location>
</feature>
<feature type="site" description="Involved in fusion with the host membrane" evidence="2">
    <location>
        <position position="935"/>
    </location>
</feature>
<feature type="site" description="Involved in fusion with the host membrane" evidence="2">
    <location>
        <position position="1101"/>
    </location>
</feature>
<feature type="site" description="Involved in fusion with the host membrane" evidence="2">
    <location>
        <position position="1215"/>
    </location>
</feature>
<feature type="glycosylation site" description="N-linked (GlcNAc...) asparagine; by host" evidence="3">
    <location>
        <position position="97"/>
    </location>
</feature>
<feature type="glycosylation site" description="N-linked (GlcNAc...) asparagine; by host" evidence="2">
    <location>
        <position position="346"/>
    </location>
</feature>
<feature type="glycosylation site" description="N-linked (GlcNAc...) asparagine; by host" evidence="3">
    <location>
        <position position="639"/>
    </location>
</feature>
<feature type="glycosylation site" description="N-linked (GlcNAc...) asparagine; by host" evidence="3">
    <location>
        <position position="1081"/>
    </location>
</feature>
<feature type="glycosylation site" description="N-linked (GlcNAc...) asparagine; by host" evidence="2">
    <location>
        <position position="1299"/>
    </location>
</feature>
<feature type="disulfide bond" evidence="2">
    <location>
        <begin position="901"/>
        <end position="1096"/>
    </location>
</feature>
<feature type="disulfide bond" evidence="2">
    <location>
        <begin position="929"/>
        <end position="934"/>
    </location>
</feature>
<evidence type="ECO:0000250" key="1">
    <source>
        <dbReference type="UniProtKB" id="H2AM12"/>
    </source>
</evidence>
<evidence type="ECO:0000250" key="2">
    <source>
        <dbReference type="UniProtKB" id="Q8JSZ3"/>
    </source>
</evidence>
<evidence type="ECO:0000255" key="3"/>
<evidence type="ECO:0000256" key="4">
    <source>
        <dbReference type="SAM" id="MobiDB-lite"/>
    </source>
</evidence>
<evidence type="ECO:0000269" key="5">
    <source>
    </source>
</evidence>
<evidence type="ECO:0000305" key="6"/>
<organismHost>
    <name type="scientific">Ixodes</name>
    <dbReference type="NCBI Taxonomy" id="6944"/>
</organismHost>
<protein>
    <recommendedName>
        <fullName>Envelopment polyprotein</fullName>
    </recommendedName>
    <alternativeName>
        <fullName>M polyprotein</fullName>
    </alternativeName>
    <component>
        <recommendedName>
            <fullName evidence="2">GP38</fullName>
        </recommendedName>
    </component>
    <component>
        <recommendedName>
            <fullName evidence="2">Glycoprotein N</fullName>
            <shortName>Gn</shortName>
        </recommendedName>
        <alternativeName>
            <fullName>Glycoprotein G2</fullName>
        </alternativeName>
    </component>
    <component>
        <recommendedName>
            <fullName evidence="2">Non-Structural protein M</fullName>
            <shortName>NSm</shortName>
        </recommendedName>
    </component>
    <component>
        <recommendedName>
            <fullName evidence="2">Glycoprotein C</fullName>
            <shortName>Gc</shortName>
        </recommendedName>
        <alternativeName>
            <fullName>Glycoprotein G1</fullName>
        </alternativeName>
    </component>
</protein>
<organism>
    <name type="scientific">Hazara virus (isolate JC280)</name>
    <dbReference type="NCBI Taxonomy" id="11597"/>
    <lineage>
        <taxon>Viruses</taxon>
        <taxon>Riboviria</taxon>
        <taxon>Orthornavirae</taxon>
        <taxon>Negarnaviricota</taxon>
        <taxon>Polyploviricotina</taxon>
        <taxon>Ellioviricetes</taxon>
        <taxon>Bunyavirales</taxon>
        <taxon>Nairoviridae</taxon>
        <taxon>Orthonairovirus</taxon>
        <taxon>Orthonairovirus hazaraense</taxon>
    </lineage>
</organism>
<reference key="1">
    <citation type="submission" date="2006-06" db="EMBL/GenBank/DDBJ databases">
        <title>Hazara virus strain JC280 M segment.</title>
        <authorList>
            <person name="Chamberlain J."/>
            <person name="Mioulet V."/>
            <person name="Hewson R."/>
        </authorList>
    </citation>
    <scope>NUCLEOTIDE SEQUENCE [LARGE SCALE GENOMIC DNA]</scope>
    <source>
        <strain>JC280</strain>
    </source>
</reference>
<reference key="2">
    <citation type="submission" date="2005-05" db="EMBL/GenBank/DDBJ databases">
        <authorList>
            <person name="Tseng H.-P."/>
            <person name="Hseu T.-H."/>
            <person name="Buhler D.R."/>
            <person name="Wang W.-D."/>
            <person name="Tsai H.-L."/>
            <person name="Hu C.-H."/>
        </authorList>
    </citation>
    <scope>NUCLEOTIDE SEQUENCE [LARGE SCALE GENOMIC DNA]</scope>
</reference>
<reference key="3">
    <citation type="submission" date="2012-12" db="EMBL/GenBank/DDBJ databases">
        <authorList>
            <person name="Eram S.M."/>
            <person name="Ma K."/>
        </authorList>
    </citation>
    <scope>NUCLEOTIDE SEQUENCE [LARGE SCALE GENOMIC DNA]</scope>
</reference>
<reference key="4">
    <citation type="submission" date="2015-01" db="EMBL/GenBank/DDBJ databases">
        <authorList>
            <person name="Lewandowski K.S."/>
            <person name="Bell A.J."/>
            <person name="Wooldridge D."/>
            <person name="Chamberlain J."/>
            <person name="Afrough B."/>
            <person name="Dowall S."/>
            <person name="Vipond R."/>
            <person name="Gharbia S."/>
            <person name="Hewson R."/>
        </authorList>
    </citation>
    <scope>NUCLEOTIDE SEQUENCE [LARGE SCALE GENOMIC DNA]</scope>
    <source>
        <strain>JC280</strain>
    </source>
</reference>
<reference key="5">
    <citation type="journal article" date="2018" name="J. Biol. Chem.">
        <title>Potassium is a trigger for conformational change in the fusion spike of an enveloped RNA virus.</title>
        <authorList>
            <person name="Punch E.K."/>
            <person name="Hover S."/>
            <person name="Blest H.T.W."/>
            <person name="Fuller J."/>
            <person name="Hewson R."/>
            <person name="Fontana J."/>
            <person name="Mankouri J."/>
            <person name="Barr J.N."/>
        </authorList>
    </citation>
    <scope>FUNCTION (GLYCOPROTEIN C)</scope>
</reference>
<sequence length="1421" mass="157101">MEGSYWWLSLLALLAWGANGESTSPAETSPAPTTPNPPVVNPSLRRKIVNQRILSAMGMDSDPSNEALNGVCQSIHSNGCNANELKLRLADFFIDTNSSQCYDEILVKKPCSSLTPAHNSHWVPRGLDKSEVDKIFDTKLKLFFSQSRKVTCLSASALNPSQFVKHFQVKIQETSGPAKQSLRSLHCVNLVWSHSHKGEKEVVHVLQSAVPVKLKNCLAMLNFRQCYYNQQSEGPVVVPSYQHNGEKWVTGAYTMTVEVDKHADGPCEISTTCITEGSEIKPGVHSLRGFKTTLVIHGKRNTGRRLLSSSNARQECSSGTFLGEGGSAQVVGPKNDGPGDHITFCNGSVVTKIRLGQEHGCYTVRRIKTYRNCRPEEGSSACEVDDELKPCGAQKCMNVHLSVKGLVKTSRGSNVQVHSCDKDCLIQIPEGFGDIQIDCPGGTQHYLESNVLDVDCPMYNRLGGLMLYFCRMSHRPRTCLALFIWLGAGYGITCIAGYMVYYAILALSMLTRCLKRKYMVKGDFCLKCEQKCVTSLDQTLHDESCSYNICPYCGNRLPEEGLRRHVPSCPKRKQRLEEIDLYLDYLLVPCPLHFALSTAVKLGTLLKRLSWVTVFLCLFLTAIAPVQGQVTTSPVLPSNQSTECTLLPPPVFLIFSAVLMSKTLKRMGPVNKVGAAGHSARRTNSPKNLYKSKQIANTKSGPREPRRRVVVKALLILTASSALQSIHLAQAFDSGSLPEGAWEEEMQLVQGCNQECSLEEDECSCPDGQSMTRKLLFFKGLNSAASKMASSHRLLTSVSIDTPWGAIKVESTYKPRLASSNIQLAWNSIEEQGDKVILSGKSTSIIKLEEKTGMQWSLGSESAAEEKRLLVSILDYTQVYSSTFQYITGDRTVSEWPKATCTGDCPDRCGCSTSSCLYKSWPHSRNWRCNPTWCWGVGTGCTCCGVDILRPFNKYFVTKWTTEYVRTDVLVCVELTDQERHCDVVEAGSQFVIGPVRVVVSDPQNVQTKLPSEILTIQKLEGNQVVDIMHATSIVSAKNACKLQSCTHGSPGDMQILHTDNLIQHSHDGGLNLADLNPLVNSTWMSWEGCDLDYYCTTGSWPSCTYTGINSENTESFDNLLNTESNLCERFHFHSKRISASGSTLQMDLKGRPNSGGGELSVLVDVKGLELHSKKISLKGLSFKTLSCSGCYACSSGLSCTVEVRIERPDEFTVHLRSVSPDIAVAEGSIIARRMTGGPLSRLRAFAVRKVKKICFEIVEKSYCKDCKNEDTTKCIEVELQPPKDILLEHKGTIIKRQNETCVSGLQCWTESASSFVSGVGSFFRNYLGSITLGIVLTLLPVAVVLLFFCYGDKLFKLCSCFRCCRGLSRGKVRKELDEDELRNKLKKFSKEGELFGKEKKDARTIALLLSGKGKNYKELV</sequence>
<name>GP_HAZVJ</name>